<reference key="1">
    <citation type="journal article" date="1999" name="Appl. Environ. Microbiol.">
        <title>High-level formation of active Pseudomonas cepacia lipase after heterologous expression of the encoding gene and its modified chaperone in Escherichia coli and rapid in vitro refolding.</title>
        <authorList>
            <person name="Quyen D.T."/>
            <person name="Schmidt-Dannert C."/>
            <person name="Schmid R.D."/>
        </authorList>
    </citation>
    <scope>NUCLEOTIDE SEQUENCE [GENOMIC DNA]</scope>
    <source>
        <strain>ATCC 21808 / FERM P-1431 / 156-A</strain>
    </source>
</reference>
<feature type="chain" id="PRO_0000218480" description="Lipase chaperone">
    <location>
        <begin position="1"/>
        <end position="344"/>
    </location>
</feature>
<feature type="transmembrane region" description="Helical" evidence="2">
    <location>
        <begin position="14"/>
        <end position="34"/>
    </location>
</feature>
<evidence type="ECO:0000250" key="1"/>
<evidence type="ECO:0000255" key="2"/>
<evidence type="ECO:0000305" key="3"/>
<keyword id="KW-0997">Cell inner membrane</keyword>
<keyword id="KW-1003">Cell membrane</keyword>
<keyword id="KW-0143">Chaperone</keyword>
<keyword id="KW-0442">Lipid degradation</keyword>
<keyword id="KW-0443">Lipid metabolism</keyword>
<keyword id="KW-0472">Membrane</keyword>
<keyword id="KW-0812">Transmembrane</keyword>
<keyword id="KW-1133">Transmembrane helix</keyword>
<proteinExistence type="inferred from homology"/>
<dbReference type="EMBL" id="AJ131766">
    <property type="protein sequence ID" value="CAA10510.1"/>
    <property type="molecule type" value="Genomic_DNA"/>
</dbReference>
<dbReference type="SMR" id="Q9ZEM5"/>
<dbReference type="GO" id="GO:0005886">
    <property type="term" value="C:plasma membrane"/>
    <property type="evidence" value="ECO:0007669"/>
    <property type="project" value="UniProtKB-SubCell"/>
</dbReference>
<dbReference type="GO" id="GO:0051082">
    <property type="term" value="F:unfolded protein binding"/>
    <property type="evidence" value="ECO:0007669"/>
    <property type="project" value="UniProtKB-UniRule"/>
</dbReference>
<dbReference type="GO" id="GO:0016042">
    <property type="term" value="P:lipid catabolic process"/>
    <property type="evidence" value="ECO:0007669"/>
    <property type="project" value="UniProtKB-UniRule"/>
</dbReference>
<dbReference type="GO" id="GO:0006457">
    <property type="term" value="P:protein folding"/>
    <property type="evidence" value="ECO:0007669"/>
    <property type="project" value="UniProtKB-UniRule"/>
</dbReference>
<dbReference type="HAMAP" id="MF_00790">
    <property type="entry name" value="Lipase_chap"/>
    <property type="match status" value="1"/>
</dbReference>
<dbReference type="InterPro" id="IPR004961">
    <property type="entry name" value="Lipase_chaperone"/>
</dbReference>
<dbReference type="NCBIfam" id="NF002333">
    <property type="entry name" value="PRK01294.1-1"/>
    <property type="match status" value="1"/>
</dbReference>
<dbReference type="Pfam" id="PF03280">
    <property type="entry name" value="Lipase_chap"/>
    <property type="match status" value="1"/>
</dbReference>
<dbReference type="SUPFAM" id="SSF158855">
    <property type="entry name" value="Lipase chaperone-like"/>
    <property type="match status" value="1"/>
</dbReference>
<protein>
    <recommendedName>
        <fullName>Lipase chaperone</fullName>
    </recommendedName>
    <alternativeName>
        <fullName>Lipase activator protein</fullName>
    </alternativeName>
    <alternativeName>
        <fullName>Lipase foldase</fullName>
    </alternativeName>
    <alternativeName>
        <fullName>Lipase helper protein</fullName>
    </alternativeName>
    <alternativeName>
        <fullName>Lipase modulator</fullName>
    </alternativeName>
</protein>
<sequence>MTAREGRAPLARCAVVYGVVGLAAIAGVAMWSGAGWHRGTGTAGELPDAAAAGGAAAAPPQAALPASTGLPSSLAGSSAPRLPLDAGGHLAKSRAVRDFFDYCLTAQSDLSAAALDAFVVRQIAAQLDGTVAQAEALDVWHRYRAYLDALAKLRDAGAVDKSDLGALQLALDQRASIAYRTLGDWSQPFFGAEQWRQRYDLARLKIAQDRTLTDAQKAERLAALEQQMPADERAAQQRVDQQRAAIDRIAQLQKSGATPDAMRAQLTQTLGPEAAARVAQMQQDDASWQSRYADYATQRAEIESAGLSPQDRDAQIAALRQRTFTKPGEAVRAASLDRGAGSAQ</sequence>
<name>LIFO2_BURCE</name>
<organism>
    <name type="scientific">Burkholderia cepacia</name>
    <name type="common">Pseudomonas cepacia</name>
    <dbReference type="NCBI Taxonomy" id="292"/>
    <lineage>
        <taxon>Bacteria</taxon>
        <taxon>Pseudomonadati</taxon>
        <taxon>Pseudomonadota</taxon>
        <taxon>Betaproteobacteria</taxon>
        <taxon>Burkholderiales</taxon>
        <taxon>Burkholderiaceae</taxon>
        <taxon>Burkholderia</taxon>
        <taxon>Burkholderia cepacia complex</taxon>
    </lineage>
</organism>
<accession>Q9ZEM5</accession>
<gene>
    <name type="primary">lifO</name>
    <name type="synonym">hp</name>
    <name type="synonym">lipB</name>
</gene>
<comment type="function">
    <text>May be involved in the folding of the extracellular lipase during its passage through the periplasm.</text>
</comment>
<comment type="subcellular location">
    <subcellularLocation>
        <location evidence="1">Cell inner membrane</location>
        <topology evidence="1">Single-pass membrane protein</topology>
        <orientation evidence="1">Periplasmic side</orientation>
    </subcellularLocation>
</comment>
<comment type="similarity">
    <text evidence="3">Belongs to the lipase chaperone family.</text>
</comment>